<evidence type="ECO:0000255" key="1">
    <source>
        <dbReference type="HAMAP-Rule" id="MF_00802"/>
    </source>
</evidence>
<sequence length="945" mass="107869">MLPLSAALQTQAQNIVQRFQETQGADCALSSQELWVLASSDFVCDMLQSQPEWLATLRKQPPVADEWQHYAAWLQDDLEEVRDEAQLMRALRLFRRETLVRIAWAQALGQCSTQETLLQLSGLAETLIVSARDWLYQTCCREWGTPCNAQGVPQPLLILGMGKLGGGELNFSSDIDLIFAYPENGQTQGGRRELDNAQFFTRLGQRLIKALDQQTIDGFVYRVDMRLRPFGDSGPLVMSFAALEDYYQEQGRDWERYAMVKARLMGGSEDAYSEELRKTLRPFVFRRYIDFSVIQSLRNMKGMIAREVRRRGLKDNIKLGAGGIREIEFITQVFQLIRGGREPALQGRSLLPTLQAVGELGLLEPQQVQAMSASYLFLRRLENLLQAIADQQTQTLPQDELDQARLAWGMGFDDWSALLLALDHHMQAVRAVFNDLIGDDSPDVGEDPDYQHYHSLWQDALEENELAPLTPHLDEEARRQMLRTIAEFRHDVDKRTIGPRGRDVLDQLMPRLLAEVCPRQDAPTALLRLTQLLLSIVTRTTYLELLVEYHAALSHLIRLCAASPMVANQLSRYPLLLDELLEPATLYQPVAPDAYRSELRQYLLRVPEDDEEQRLEALRQFKQAQQLRIAAGDISGALPVMKVSDHLTYLAEAIIDTVVQQAWNDMVARYGQPTHLQEREGRGFAVIGYGKLGGWELGYSSDLDLVFILDCPPEVMTDGDRSIDGRQFYLRLAQRVMHLFSTRTSSGILYEVDARLRPSGAAGMLVSTVEAFADYQQSEAWTWEHQALVRARIVHGDPLLHQQFDVIRREILCKPRDLETLKREVREMREKMRNHLGNKQRELFDIKADEGGITDIEFIAQYLVLGYAAAEPRLTRWSDNVRIFELMANYDIMPEEEARALTQAYVTMRDEIHHLALQEHSGKIGNGQFAAEREQVRASWAKWLG</sequence>
<organism>
    <name type="scientific">Serratia proteamaculans (strain 568)</name>
    <dbReference type="NCBI Taxonomy" id="399741"/>
    <lineage>
        <taxon>Bacteria</taxon>
        <taxon>Pseudomonadati</taxon>
        <taxon>Pseudomonadota</taxon>
        <taxon>Gammaproteobacteria</taxon>
        <taxon>Enterobacterales</taxon>
        <taxon>Yersiniaceae</taxon>
        <taxon>Serratia</taxon>
    </lineage>
</organism>
<reference key="1">
    <citation type="submission" date="2007-09" db="EMBL/GenBank/DDBJ databases">
        <title>Complete sequence of chromosome of Serratia proteamaculans 568.</title>
        <authorList>
            <consortium name="US DOE Joint Genome Institute"/>
            <person name="Copeland A."/>
            <person name="Lucas S."/>
            <person name="Lapidus A."/>
            <person name="Barry K."/>
            <person name="Glavina del Rio T."/>
            <person name="Dalin E."/>
            <person name="Tice H."/>
            <person name="Pitluck S."/>
            <person name="Chain P."/>
            <person name="Malfatti S."/>
            <person name="Shin M."/>
            <person name="Vergez L."/>
            <person name="Schmutz J."/>
            <person name="Larimer F."/>
            <person name="Land M."/>
            <person name="Hauser L."/>
            <person name="Kyrpides N."/>
            <person name="Kim E."/>
            <person name="Taghavi S."/>
            <person name="Newman L."/>
            <person name="Vangronsveld J."/>
            <person name="van der Lelie D."/>
            <person name="Richardson P."/>
        </authorList>
    </citation>
    <scope>NUCLEOTIDE SEQUENCE [LARGE SCALE GENOMIC DNA]</scope>
    <source>
        <strain>568</strain>
    </source>
</reference>
<feature type="chain" id="PRO_1000062266" description="Bifunctional glutamine synthetase adenylyltransferase/adenylyl-removing enzyme">
    <location>
        <begin position="1"/>
        <end position="945"/>
    </location>
</feature>
<feature type="region of interest" description="Adenylyl removase" evidence="1">
    <location>
        <begin position="1"/>
        <end position="441"/>
    </location>
</feature>
<feature type="region of interest" description="Adenylyl transferase" evidence="1">
    <location>
        <begin position="450"/>
        <end position="945"/>
    </location>
</feature>
<comment type="function">
    <text evidence="1">Involved in the regulation of glutamine synthetase GlnA, a key enzyme in the process to assimilate ammonia. When cellular nitrogen levels are high, the C-terminal adenylyl transferase (AT) inactivates GlnA by covalent transfer of an adenylyl group from ATP to specific tyrosine residue of GlnA, thus reducing its activity. Conversely, when nitrogen levels are low, the N-terminal adenylyl removase (AR) activates GlnA by removing the adenylyl group by phosphorolysis, increasing its activity. The regulatory region of GlnE binds the signal transduction protein PII (GlnB) which indicates the nitrogen status of the cell.</text>
</comment>
<comment type="catalytic activity">
    <reaction evidence="1">
        <text>[glutamine synthetase]-O(4)-(5'-adenylyl)-L-tyrosine + phosphate = [glutamine synthetase]-L-tyrosine + ADP</text>
        <dbReference type="Rhea" id="RHEA:43716"/>
        <dbReference type="Rhea" id="RHEA-COMP:10660"/>
        <dbReference type="Rhea" id="RHEA-COMP:10661"/>
        <dbReference type="ChEBI" id="CHEBI:43474"/>
        <dbReference type="ChEBI" id="CHEBI:46858"/>
        <dbReference type="ChEBI" id="CHEBI:83624"/>
        <dbReference type="ChEBI" id="CHEBI:456216"/>
        <dbReference type="EC" id="2.7.7.89"/>
    </reaction>
</comment>
<comment type="catalytic activity">
    <reaction evidence="1">
        <text>[glutamine synthetase]-L-tyrosine + ATP = [glutamine synthetase]-O(4)-(5'-adenylyl)-L-tyrosine + diphosphate</text>
        <dbReference type="Rhea" id="RHEA:18589"/>
        <dbReference type="Rhea" id="RHEA-COMP:10660"/>
        <dbReference type="Rhea" id="RHEA-COMP:10661"/>
        <dbReference type="ChEBI" id="CHEBI:30616"/>
        <dbReference type="ChEBI" id="CHEBI:33019"/>
        <dbReference type="ChEBI" id="CHEBI:46858"/>
        <dbReference type="ChEBI" id="CHEBI:83624"/>
        <dbReference type="EC" id="2.7.7.42"/>
    </reaction>
</comment>
<comment type="cofactor">
    <cofactor evidence="1">
        <name>Mg(2+)</name>
        <dbReference type="ChEBI" id="CHEBI:18420"/>
    </cofactor>
</comment>
<comment type="similarity">
    <text evidence="1">Belongs to the GlnE family.</text>
</comment>
<protein>
    <recommendedName>
        <fullName evidence="1">Bifunctional glutamine synthetase adenylyltransferase/adenylyl-removing enzyme</fullName>
    </recommendedName>
    <alternativeName>
        <fullName evidence="1">ATP:glutamine synthetase adenylyltransferase</fullName>
    </alternativeName>
    <alternativeName>
        <fullName evidence="1">ATase</fullName>
    </alternativeName>
    <domain>
        <recommendedName>
            <fullName evidence="1">Glutamine synthetase adenylyl-L-tyrosine phosphorylase</fullName>
            <ecNumber evidence="1">2.7.7.89</ecNumber>
        </recommendedName>
        <alternativeName>
            <fullName evidence="1">Adenylyl removase</fullName>
            <shortName evidence="1">AR</shortName>
            <shortName evidence="1">AT-N</shortName>
        </alternativeName>
    </domain>
    <domain>
        <recommendedName>
            <fullName evidence="1">Glutamine synthetase adenylyl transferase</fullName>
            <ecNumber evidence="1">2.7.7.42</ecNumber>
        </recommendedName>
        <alternativeName>
            <fullName evidence="1">Adenylyl transferase</fullName>
            <shortName evidence="1">AT</shortName>
            <shortName evidence="1">AT-C</shortName>
        </alternativeName>
    </domain>
</protein>
<proteinExistence type="inferred from homology"/>
<gene>
    <name evidence="1" type="primary">glnE</name>
    <name type="ordered locus">Spro_4290</name>
</gene>
<keyword id="KW-0067">ATP-binding</keyword>
<keyword id="KW-0460">Magnesium</keyword>
<keyword id="KW-0511">Multifunctional enzyme</keyword>
<keyword id="KW-0547">Nucleotide-binding</keyword>
<keyword id="KW-0548">Nucleotidyltransferase</keyword>
<keyword id="KW-0808">Transferase</keyword>
<dbReference type="EC" id="2.7.7.89" evidence="1"/>
<dbReference type="EC" id="2.7.7.42" evidence="1"/>
<dbReference type="EMBL" id="CP000826">
    <property type="protein sequence ID" value="ABV43384.1"/>
    <property type="molecule type" value="Genomic_DNA"/>
</dbReference>
<dbReference type="SMR" id="A8GJU4"/>
<dbReference type="STRING" id="399741.Spro_4290"/>
<dbReference type="KEGG" id="spe:Spro_4290"/>
<dbReference type="eggNOG" id="COG1391">
    <property type="taxonomic scope" value="Bacteria"/>
</dbReference>
<dbReference type="HOGENOM" id="CLU_006233_0_1_6"/>
<dbReference type="OrthoDB" id="9759366at2"/>
<dbReference type="GO" id="GO:0005829">
    <property type="term" value="C:cytosol"/>
    <property type="evidence" value="ECO:0007669"/>
    <property type="project" value="TreeGrafter"/>
</dbReference>
<dbReference type="GO" id="GO:0008882">
    <property type="term" value="F:[glutamate-ammonia-ligase] adenylyltransferase activity"/>
    <property type="evidence" value="ECO:0007669"/>
    <property type="project" value="UniProtKB-UniRule"/>
</dbReference>
<dbReference type="GO" id="GO:0047388">
    <property type="term" value="F:[glutamine synthetase]-adenylyl-L-tyrosine phosphorylase activity"/>
    <property type="evidence" value="ECO:0007669"/>
    <property type="project" value="UniProtKB-EC"/>
</dbReference>
<dbReference type="GO" id="GO:0005524">
    <property type="term" value="F:ATP binding"/>
    <property type="evidence" value="ECO:0007669"/>
    <property type="project" value="UniProtKB-UniRule"/>
</dbReference>
<dbReference type="GO" id="GO:0000287">
    <property type="term" value="F:magnesium ion binding"/>
    <property type="evidence" value="ECO:0007669"/>
    <property type="project" value="UniProtKB-UniRule"/>
</dbReference>
<dbReference type="GO" id="GO:0000820">
    <property type="term" value="P:regulation of glutamine family amino acid metabolic process"/>
    <property type="evidence" value="ECO:0007669"/>
    <property type="project" value="UniProtKB-UniRule"/>
</dbReference>
<dbReference type="CDD" id="cd05401">
    <property type="entry name" value="NT_GlnE_GlnD_like"/>
    <property type="match status" value="2"/>
</dbReference>
<dbReference type="FunFam" id="1.20.120.1510:FF:000001">
    <property type="entry name" value="Bifunctional glutamine synthetase adenylyltransferase/adenylyl-removing enzyme"/>
    <property type="match status" value="1"/>
</dbReference>
<dbReference type="FunFam" id="1.20.120.330:FF:000005">
    <property type="entry name" value="Bifunctional glutamine synthetase adenylyltransferase/adenylyl-removing enzyme"/>
    <property type="match status" value="1"/>
</dbReference>
<dbReference type="FunFam" id="1.20.120.330:FF:000008">
    <property type="entry name" value="Bifunctional glutamine synthetase adenylyltransferase/adenylyl-removing enzyme"/>
    <property type="match status" value="1"/>
</dbReference>
<dbReference type="FunFam" id="3.30.460.10:FF:000009">
    <property type="entry name" value="Bifunctional glutamine synthetase adenylyltransferase/adenylyl-removing enzyme"/>
    <property type="match status" value="1"/>
</dbReference>
<dbReference type="FunFam" id="3.30.460.10:FF:000014">
    <property type="entry name" value="Bifunctional glutamine synthetase adenylyltransferase/adenylyl-removing enzyme"/>
    <property type="match status" value="1"/>
</dbReference>
<dbReference type="Gene3D" id="1.20.120.1510">
    <property type="match status" value="1"/>
</dbReference>
<dbReference type="Gene3D" id="3.30.460.10">
    <property type="entry name" value="Beta Polymerase, domain 2"/>
    <property type="match status" value="2"/>
</dbReference>
<dbReference type="Gene3D" id="1.10.4050.10">
    <property type="entry name" value="Glutamine synthase adenylyltransferase GlnE"/>
    <property type="match status" value="1"/>
</dbReference>
<dbReference type="Gene3D" id="1.20.120.330">
    <property type="entry name" value="Nucleotidyltransferases domain 2"/>
    <property type="match status" value="2"/>
</dbReference>
<dbReference type="HAMAP" id="MF_00802">
    <property type="entry name" value="GlnE"/>
    <property type="match status" value="1"/>
</dbReference>
<dbReference type="InterPro" id="IPR023057">
    <property type="entry name" value="GlnE"/>
</dbReference>
<dbReference type="InterPro" id="IPR005190">
    <property type="entry name" value="GlnE_rpt_dom"/>
</dbReference>
<dbReference type="InterPro" id="IPR043519">
    <property type="entry name" value="NT_sf"/>
</dbReference>
<dbReference type="InterPro" id="IPR013546">
    <property type="entry name" value="PII_UdlTrfase/GS_AdlTrfase"/>
</dbReference>
<dbReference type="NCBIfam" id="NF008292">
    <property type="entry name" value="PRK11072.1"/>
    <property type="match status" value="1"/>
</dbReference>
<dbReference type="PANTHER" id="PTHR30621:SF0">
    <property type="entry name" value="BIFUNCTIONAL GLUTAMINE SYNTHETASE ADENYLYLTRANSFERASE_ADENYLYL-REMOVING ENZYME"/>
    <property type="match status" value="1"/>
</dbReference>
<dbReference type="PANTHER" id="PTHR30621">
    <property type="entry name" value="GLUTAMINE SYNTHETASE ADENYLYLTRANSFERASE"/>
    <property type="match status" value="1"/>
</dbReference>
<dbReference type="Pfam" id="PF08335">
    <property type="entry name" value="GlnD_UR_UTase"/>
    <property type="match status" value="2"/>
</dbReference>
<dbReference type="Pfam" id="PF03710">
    <property type="entry name" value="GlnE"/>
    <property type="match status" value="2"/>
</dbReference>
<dbReference type="SUPFAM" id="SSF81301">
    <property type="entry name" value="Nucleotidyltransferase"/>
    <property type="match status" value="2"/>
</dbReference>
<dbReference type="SUPFAM" id="SSF81593">
    <property type="entry name" value="Nucleotidyltransferase substrate binding subunit/domain"/>
    <property type="match status" value="2"/>
</dbReference>
<accession>A8GJU4</accession>
<name>GLNE_SERP5</name>